<name>MCH_PANPA</name>
<accession>O62688</accession>
<evidence type="ECO:0000250" key="1"/>
<evidence type="ECO:0000255" key="2"/>
<evidence type="ECO:0000305" key="3"/>
<gene>
    <name type="primary">PMCH</name>
</gene>
<reference key="1">
    <citation type="journal article" date="1998" name="Mol. Biol. Evol.">
        <title>Emergence of a brain-expressed variant melanin-concentrating hormone gene during higher primate evolution: a gene 'in search of a function'.</title>
        <authorList>
            <person name="Viale A."/>
            <person name="Ortola C."/>
            <person name="Richard F."/>
            <person name="Vernier P."/>
            <person name="Presse F."/>
            <person name="Schilling S."/>
            <person name="Dutrillaux B."/>
            <person name="Nahon J.-L."/>
        </authorList>
    </citation>
    <scope>NUCLEOTIDE SEQUENCE [GENOMIC DNA]</scope>
</reference>
<protein>
    <recommendedName>
        <fullName>Pro-MCH</fullName>
    </recommendedName>
</protein>
<dbReference type="EMBL" id="AF029396">
    <property type="protein sequence ID" value="AAC05249.1"/>
    <property type="molecule type" value="Genomic_DNA"/>
</dbReference>
<dbReference type="STRING" id="9597.ENSPPAP00000033923"/>
<dbReference type="eggNOG" id="ENOG502RZ12">
    <property type="taxonomic scope" value="Eukaryota"/>
</dbReference>
<dbReference type="Proteomes" id="UP000240080">
    <property type="component" value="Unplaced"/>
</dbReference>
<dbReference type="GO" id="GO:0005576">
    <property type="term" value="C:extracellular region"/>
    <property type="evidence" value="ECO:0007669"/>
    <property type="project" value="UniProtKB-SubCell"/>
</dbReference>
<dbReference type="GO" id="GO:0045202">
    <property type="term" value="C:synapse"/>
    <property type="evidence" value="ECO:0007669"/>
    <property type="project" value="GOC"/>
</dbReference>
<dbReference type="GO" id="GO:0030354">
    <property type="term" value="F:melanin-concentrating hormone activity"/>
    <property type="evidence" value="ECO:0007669"/>
    <property type="project" value="InterPro"/>
</dbReference>
<dbReference type="GO" id="GO:0031777">
    <property type="term" value="F:type 1 melanin-concentrating hormone receptor binding"/>
    <property type="evidence" value="ECO:0007669"/>
    <property type="project" value="TreeGrafter"/>
</dbReference>
<dbReference type="GO" id="GO:0007268">
    <property type="term" value="P:chemical synaptic transmission"/>
    <property type="evidence" value="ECO:0007669"/>
    <property type="project" value="InterPro"/>
</dbReference>
<dbReference type="InterPro" id="IPR005456">
    <property type="entry name" value="Prepro-melanin_conc_hormone"/>
</dbReference>
<dbReference type="PANTHER" id="PTHR12091">
    <property type="entry name" value="MELANIN-CONCENTRATING HORMONE"/>
    <property type="match status" value="1"/>
</dbReference>
<dbReference type="PANTHER" id="PTHR12091:SF0">
    <property type="entry name" value="PRO-MCH"/>
    <property type="match status" value="1"/>
</dbReference>
<sequence length="71" mass="7942">AKMNLSSYILILTFSLFSQGILLSASKSIRNSDDDMVFNTFRLGKAFQKEDTAEKSVIAPSLEEYKNDESS</sequence>
<proteinExistence type="inferred from homology"/>
<organism>
    <name type="scientific">Pan paniscus</name>
    <name type="common">Pygmy chimpanzee</name>
    <name type="synonym">Bonobo</name>
    <dbReference type="NCBI Taxonomy" id="9597"/>
    <lineage>
        <taxon>Eukaryota</taxon>
        <taxon>Metazoa</taxon>
        <taxon>Chordata</taxon>
        <taxon>Craniata</taxon>
        <taxon>Vertebrata</taxon>
        <taxon>Euteleostomi</taxon>
        <taxon>Mammalia</taxon>
        <taxon>Eutheria</taxon>
        <taxon>Euarchontoglires</taxon>
        <taxon>Primates</taxon>
        <taxon>Haplorrhini</taxon>
        <taxon>Catarrhini</taxon>
        <taxon>Hominidae</taxon>
        <taxon>Pan</taxon>
    </lineage>
</organism>
<feature type="signal peptide" evidence="2">
    <location>
        <begin position="1" status="less than"/>
        <end position="20"/>
    </location>
</feature>
<feature type="chain" id="PRO_0000019109" description="Pro-MCH">
    <location>
        <begin position="21"/>
        <end position="71" status="greater than"/>
    </location>
</feature>
<feature type="non-terminal residue">
    <location>
        <position position="1"/>
    </location>
</feature>
<feature type="non-terminal residue">
    <location>
        <position position="71"/>
    </location>
</feature>
<keyword id="KW-1185">Reference proteome</keyword>
<keyword id="KW-0964">Secreted</keyword>
<keyword id="KW-0732">Signal</keyword>
<comment type="subcellular location">
    <subcellularLocation>
        <location evidence="1">Secreted</location>
    </subcellularLocation>
</comment>
<comment type="similarity">
    <text evidence="3">Belongs to the melanin-concentrating hormone family.</text>
</comment>